<feature type="chain" id="PRO_1000166588" description="ATP synthase subunit beta">
    <location>
        <begin position="1"/>
        <end position="468"/>
    </location>
</feature>
<feature type="binding site" evidence="1">
    <location>
        <begin position="150"/>
        <end position="157"/>
    </location>
    <ligand>
        <name>ATP</name>
        <dbReference type="ChEBI" id="CHEBI:30616"/>
    </ligand>
</feature>
<name>ATPB_ACIET</name>
<protein>
    <recommendedName>
        <fullName evidence="1">ATP synthase subunit beta</fullName>
        <ecNumber evidence="1">7.1.2.2</ecNumber>
    </recommendedName>
    <alternativeName>
        <fullName evidence="1">ATP synthase F1 sector subunit beta</fullName>
    </alternativeName>
    <alternativeName>
        <fullName evidence="1">F-ATPase subunit beta</fullName>
    </alternativeName>
</protein>
<sequence>MAQVQGKIVQCIGAVVDVEFPRDQMPKVYDALKLEGSPLTLEVQQQLGDGVVRTIALGSSDGLKRGLMVTNTGNPITVPVGKATLGRIMDVLGNPIDERGPVDQSLTASIHRKAPAYDELSPSQELLETGIKVIDLVCPFAKGGKVGLFGGAGVGKTVNMMELINNIAKAHSGLSVFAGVGERTREGNDFYHEMADSGVVNLENLGESKVAMVYGQMNEPPGNRLRVALTGLTIAESFRDEGRDVLFFVDNIYRYTLAGTEVSALLGRMPSAVGYQPTLAEEMGRLQERITSTKVGSITSIQAVYVPADDLTDPSPATTFAHLDSTVVLSRDIAALGIYPAVDPLDSTSRQLDPQVVGEEHYQVARQVQGTLQRYKELRDIIAILGMDELAPEDKLVVARARKIQRFLSQPFHVAEVFTGSPGKYVPLSETIRGFKMIVAGECDHLPEQAFYMVGTIDEAFEKAKKVA</sequence>
<comment type="function">
    <text evidence="1">Produces ATP from ADP in the presence of a proton gradient across the membrane. The catalytic sites are hosted primarily by the beta subunits.</text>
</comment>
<comment type="catalytic activity">
    <reaction evidence="1">
        <text>ATP + H2O + 4 H(+)(in) = ADP + phosphate + 5 H(+)(out)</text>
        <dbReference type="Rhea" id="RHEA:57720"/>
        <dbReference type="ChEBI" id="CHEBI:15377"/>
        <dbReference type="ChEBI" id="CHEBI:15378"/>
        <dbReference type="ChEBI" id="CHEBI:30616"/>
        <dbReference type="ChEBI" id="CHEBI:43474"/>
        <dbReference type="ChEBI" id="CHEBI:456216"/>
        <dbReference type="EC" id="7.1.2.2"/>
    </reaction>
</comment>
<comment type="subunit">
    <text evidence="1">F-type ATPases have 2 components, CF(1) - the catalytic core - and CF(0) - the membrane proton channel. CF(1) has five subunits: alpha(3), beta(3), gamma(1), delta(1), epsilon(1). CF(0) has three main subunits: a(1), b(2) and c(9-12). The alpha and beta chains form an alternating ring which encloses part of the gamma chain. CF(1) is attached to CF(0) by a central stalk formed by the gamma and epsilon chains, while a peripheral stalk is formed by the delta and b chains.</text>
</comment>
<comment type="subcellular location">
    <subcellularLocation>
        <location evidence="1">Cell inner membrane</location>
        <topology evidence="1">Peripheral membrane protein</topology>
    </subcellularLocation>
</comment>
<comment type="similarity">
    <text evidence="1">Belongs to the ATPase alpha/beta chains family.</text>
</comment>
<evidence type="ECO:0000255" key="1">
    <source>
        <dbReference type="HAMAP-Rule" id="MF_01347"/>
    </source>
</evidence>
<dbReference type="EC" id="7.1.2.2" evidence="1"/>
<dbReference type="EMBL" id="CP001392">
    <property type="protein sequence ID" value="ACM31787.1"/>
    <property type="molecule type" value="Genomic_DNA"/>
</dbReference>
<dbReference type="RefSeq" id="WP_012655377.1">
    <property type="nucleotide sequence ID" value="NC_011992.1"/>
</dbReference>
<dbReference type="SMR" id="B9MBA3"/>
<dbReference type="GeneID" id="84683182"/>
<dbReference type="KEGG" id="dia:Dtpsy_0303"/>
<dbReference type="eggNOG" id="COG0055">
    <property type="taxonomic scope" value="Bacteria"/>
</dbReference>
<dbReference type="HOGENOM" id="CLU_022398_0_2_4"/>
<dbReference type="Proteomes" id="UP000000450">
    <property type="component" value="Chromosome"/>
</dbReference>
<dbReference type="GO" id="GO:0005886">
    <property type="term" value="C:plasma membrane"/>
    <property type="evidence" value="ECO:0007669"/>
    <property type="project" value="UniProtKB-SubCell"/>
</dbReference>
<dbReference type="GO" id="GO:0045259">
    <property type="term" value="C:proton-transporting ATP synthase complex"/>
    <property type="evidence" value="ECO:0007669"/>
    <property type="project" value="UniProtKB-KW"/>
</dbReference>
<dbReference type="GO" id="GO:0005524">
    <property type="term" value="F:ATP binding"/>
    <property type="evidence" value="ECO:0007669"/>
    <property type="project" value="UniProtKB-UniRule"/>
</dbReference>
<dbReference type="GO" id="GO:0016887">
    <property type="term" value="F:ATP hydrolysis activity"/>
    <property type="evidence" value="ECO:0007669"/>
    <property type="project" value="InterPro"/>
</dbReference>
<dbReference type="GO" id="GO:0046933">
    <property type="term" value="F:proton-transporting ATP synthase activity, rotational mechanism"/>
    <property type="evidence" value="ECO:0007669"/>
    <property type="project" value="UniProtKB-UniRule"/>
</dbReference>
<dbReference type="CDD" id="cd18110">
    <property type="entry name" value="ATP-synt_F1_beta_C"/>
    <property type="match status" value="1"/>
</dbReference>
<dbReference type="CDD" id="cd18115">
    <property type="entry name" value="ATP-synt_F1_beta_N"/>
    <property type="match status" value="1"/>
</dbReference>
<dbReference type="CDD" id="cd01133">
    <property type="entry name" value="F1-ATPase_beta_CD"/>
    <property type="match status" value="1"/>
</dbReference>
<dbReference type="FunFam" id="1.10.1140.10:FF:000001">
    <property type="entry name" value="ATP synthase subunit beta"/>
    <property type="match status" value="1"/>
</dbReference>
<dbReference type="FunFam" id="3.40.50.300:FF:000004">
    <property type="entry name" value="ATP synthase subunit beta"/>
    <property type="match status" value="1"/>
</dbReference>
<dbReference type="Gene3D" id="2.40.10.170">
    <property type="match status" value="1"/>
</dbReference>
<dbReference type="Gene3D" id="1.10.1140.10">
    <property type="entry name" value="Bovine Mitochondrial F1-atpase, Atp Synthase Beta Chain, Chain D, domain 3"/>
    <property type="match status" value="1"/>
</dbReference>
<dbReference type="Gene3D" id="3.40.50.300">
    <property type="entry name" value="P-loop containing nucleotide triphosphate hydrolases"/>
    <property type="match status" value="1"/>
</dbReference>
<dbReference type="HAMAP" id="MF_01347">
    <property type="entry name" value="ATP_synth_beta_bact"/>
    <property type="match status" value="1"/>
</dbReference>
<dbReference type="InterPro" id="IPR003593">
    <property type="entry name" value="AAA+_ATPase"/>
</dbReference>
<dbReference type="InterPro" id="IPR055190">
    <property type="entry name" value="ATP-synt_VA_C"/>
</dbReference>
<dbReference type="InterPro" id="IPR005722">
    <property type="entry name" value="ATP_synth_F1_bsu"/>
</dbReference>
<dbReference type="InterPro" id="IPR020003">
    <property type="entry name" value="ATPase_a/bsu_AS"/>
</dbReference>
<dbReference type="InterPro" id="IPR050053">
    <property type="entry name" value="ATPase_alpha/beta_chains"/>
</dbReference>
<dbReference type="InterPro" id="IPR004100">
    <property type="entry name" value="ATPase_F1/V1/A1_a/bsu_N"/>
</dbReference>
<dbReference type="InterPro" id="IPR036121">
    <property type="entry name" value="ATPase_F1/V1/A1_a/bsu_N_sf"/>
</dbReference>
<dbReference type="InterPro" id="IPR000194">
    <property type="entry name" value="ATPase_F1/V1/A1_a/bsu_nucl-bd"/>
</dbReference>
<dbReference type="InterPro" id="IPR024034">
    <property type="entry name" value="ATPase_F1/V1_b/a_C"/>
</dbReference>
<dbReference type="InterPro" id="IPR027417">
    <property type="entry name" value="P-loop_NTPase"/>
</dbReference>
<dbReference type="NCBIfam" id="TIGR01039">
    <property type="entry name" value="atpD"/>
    <property type="match status" value="1"/>
</dbReference>
<dbReference type="PANTHER" id="PTHR15184">
    <property type="entry name" value="ATP SYNTHASE"/>
    <property type="match status" value="1"/>
</dbReference>
<dbReference type="PANTHER" id="PTHR15184:SF71">
    <property type="entry name" value="ATP SYNTHASE SUBUNIT BETA, MITOCHONDRIAL"/>
    <property type="match status" value="1"/>
</dbReference>
<dbReference type="Pfam" id="PF00006">
    <property type="entry name" value="ATP-synt_ab"/>
    <property type="match status" value="1"/>
</dbReference>
<dbReference type="Pfam" id="PF02874">
    <property type="entry name" value="ATP-synt_ab_N"/>
    <property type="match status" value="1"/>
</dbReference>
<dbReference type="Pfam" id="PF22919">
    <property type="entry name" value="ATP-synt_VA_C"/>
    <property type="match status" value="1"/>
</dbReference>
<dbReference type="SMART" id="SM00382">
    <property type="entry name" value="AAA"/>
    <property type="match status" value="1"/>
</dbReference>
<dbReference type="SUPFAM" id="SSF47917">
    <property type="entry name" value="C-terminal domain of alpha and beta subunits of F1 ATP synthase"/>
    <property type="match status" value="1"/>
</dbReference>
<dbReference type="SUPFAM" id="SSF50615">
    <property type="entry name" value="N-terminal domain of alpha and beta subunits of F1 ATP synthase"/>
    <property type="match status" value="1"/>
</dbReference>
<dbReference type="SUPFAM" id="SSF52540">
    <property type="entry name" value="P-loop containing nucleoside triphosphate hydrolases"/>
    <property type="match status" value="1"/>
</dbReference>
<dbReference type="PROSITE" id="PS00152">
    <property type="entry name" value="ATPASE_ALPHA_BETA"/>
    <property type="match status" value="1"/>
</dbReference>
<gene>
    <name evidence="1" type="primary">atpD</name>
    <name type="ordered locus">Dtpsy_0303</name>
</gene>
<proteinExistence type="inferred from homology"/>
<accession>B9MBA3</accession>
<reference key="1">
    <citation type="submission" date="2009-01" db="EMBL/GenBank/DDBJ databases">
        <title>Complete sequence of Diaphorobacter sp. TPSY.</title>
        <authorList>
            <consortium name="US DOE Joint Genome Institute"/>
            <person name="Lucas S."/>
            <person name="Copeland A."/>
            <person name="Lapidus A."/>
            <person name="Glavina del Rio T."/>
            <person name="Tice H."/>
            <person name="Bruce D."/>
            <person name="Goodwin L."/>
            <person name="Pitluck S."/>
            <person name="Chertkov O."/>
            <person name="Brettin T."/>
            <person name="Detter J.C."/>
            <person name="Han C."/>
            <person name="Larimer F."/>
            <person name="Land M."/>
            <person name="Hauser L."/>
            <person name="Kyrpides N."/>
            <person name="Mikhailova N."/>
            <person name="Coates J.D."/>
        </authorList>
    </citation>
    <scope>NUCLEOTIDE SEQUENCE [LARGE SCALE GENOMIC DNA]</scope>
    <source>
        <strain>TPSY</strain>
    </source>
</reference>
<organism>
    <name type="scientific">Acidovorax ebreus (strain TPSY)</name>
    <name type="common">Diaphorobacter sp. (strain TPSY)</name>
    <dbReference type="NCBI Taxonomy" id="535289"/>
    <lineage>
        <taxon>Bacteria</taxon>
        <taxon>Pseudomonadati</taxon>
        <taxon>Pseudomonadota</taxon>
        <taxon>Betaproteobacteria</taxon>
        <taxon>Burkholderiales</taxon>
        <taxon>Comamonadaceae</taxon>
        <taxon>Diaphorobacter</taxon>
    </lineage>
</organism>
<keyword id="KW-0066">ATP synthesis</keyword>
<keyword id="KW-0067">ATP-binding</keyword>
<keyword id="KW-0997">Cell inner membrane</keyword>
<keyword id="KW-1003">Cell membrane</keyword>
<keyword id="KW-0139">CF(1)</keyword>
<keyword id="KW-0375">Hydrogen ion transport</keyword>
<keyword id="KW-0406">Ion transport</keyword>
<keyword id="KW-0472">Membrane</keyword>
<keyword id="KW-0547">Nucleotide-binding</keyword>
<keyword id="KW-1185">Reference proteome</keyword>
<keyword id="KW-1278">Translocase</keyword>
<keyword id="KW-0813">Transport</keyword>